<protein>
    <recommendedName>
        <fullName evidence="1">Small ribosomal subunit protein uS17</fullName>
    </recommendedName>
    <alternativeName>
        <fullName evidence="2">30S ribosomal protein S17</fullName>
    </alternativeName>
</protein>
<reference key="1">
    <citation type="submission" date="2006-08" db="EMBL/GenBank/DDBJ databases">
        <title>Complete sequence of chromosome 1 of Shewanella sp. MR-7.</title>
        <authorList>
            <person name="Copeland A."/>
            <person name="Lucas S."/>
            <person name="Lapidus A."/>
            <person name="Barry K."/>
            <person name="Detter J.C."/>
            <person name="Glavina del Rio T."/>
            <person name="Hammon N."/>
            <person name="Israni S."/>
            <person name="Dalin E."/>
            <person name="Tice H."/>
            <person name="Pitluck S."/>
            <person name="Kiss H."/>
            <person name="Brettin T."/>
            <person name="Bruce D."/>
            <person name="Han C."/>
            <person name="Tapia R."/>
            <person name="Gilna P."/>
            <person name="Schmutz J."/>
            <person name="Larimer F."/>
            <person name="Land M."/>
            <person name="Hauser L."/>
            <person name="Kyrpides N."/>
            <person name="Mikhailova N."/>
            <person name="Nealson K."/>
            <person name="Konstantinidis K."/>
            <person name="Klappenbach J."/>
            <person name="Tiedje J."/>
            <person name="Richardson P."/>
        </authorList>
    </citation>
    <scope>NUCLEOTIDE SEQUENCE [LARGE SCALE GENOMIC DNA]</scope>
    <source>
        <strain>MR-7</strain>
    </source>
</reference>
<name>RS17_SHESR</name>
<organism>
    <name type="scientific">Shewanella sp. (strain MR-7)</name>
    <dbReference type="NCBI Taxonomy" id="60481"/>
    <lineage>
        <taxon>Bacteria</taxon>
        <taxon>Pseudomonadati</taxon>
        <taxon>Pseudomonadota</taxon>
        <taxon>Gammaproteobacteria</taxon>
        <taxon>Alteromonadales</taxon>
        <taxon>Shewanellaceae</taxon>
        <taxon>Shewanella</taxon>
    </lineage>
</organism>
<proteinExistence type="inferred from homology"/>
<keyword id="KW-0687">Ribonucleoprotein</keyword>
<keyword id="KW-0689">Ribosomal protein</keyword>
<keyword id="KW-0694">RNA-binding</keyword>
<keyword id="KW-0699">rRNA-binding</keyword>
<dbReference type="EMBL" id="CP000444">
    <property type="protein sequence ID" value="ABI41209.1"/>
    <property type="molecule type" value="Genomic_DNA"/>
</dbReference>
<dbReference type="SMR" id="Q0I096"/>
<dbReference type="KEGG" id="shm:Shewmr7_0203"/>
<dbReference type="HOGENOM" id="CLU_073626_1_1_6"/>
<dbReference type="GO" id="GO:0022627">
    <property type="term" value="C:cytosolic small ribosomal subunit"/>
    <property type="evidence" value="ECO:0007669"/>
    <property type="project" value="TreeGrafter"/>
</dbReference>
<dbReference type="GO" id="GO:0019843">
    <property type="term" value="F:rRNA binding"/>
    <property type="evidence" value="ECO:0007669"/>
    <property type="project" value="UniProtKB-UniRule"/>
</dbReference>
<dbReference type="GO" id="GO:0003735">
    <property type="term" value="F:structural constituent of ribosome"/>
    <property type="evidence" value="ECO:0007669"/>
    <property type="project" value="InterPro"/>
</dbReference>
<dbReference type="GO" id="GO:0006412">
    <property type="term" value="P:translation"/>
    <property type="evidence" value="ECO:0007669"/>
    <property type="project" value="UniProtKB-UniRule"/>
</dbReference>
<dbReference type="CDD" id="cd00364">
    <property type="entry name" value="Ribosomal_uS17"/>
    <property type="match status" value="1"/>
</dbReference>
<dbReference type="FunFam" id="2.40.50.140:FF:000014">
    <property type="entry name" value="30S ribosomal protein S17"/>
    <property type="match status" value="1"/>
</dbReference>
<dbReference type="Gene3D" id="2.40.50.140">
    <property type="entry name" value="Nucleic acid-binding proteins"/>
    <property type="match status" value="1"/>
</dbReference>
<dbReference type="HAMAP" id="MF_01345_B">
    <property type="entry name" value="Ribosomal_uS17_B"/>
    <property type="match status" value="1"/>
</dbReference>
<dbReference type="InterPro" id="IPR012340">
    <property type="entry name" value="NA-bd_OB-fold"/>
</dbReference>
<dbReference type="InterPro" id="IPR000266">
    <property type="entry name" value="Ribosomal_uS17"/>
</dbReference>
<dbReference type="InterPro" id="IPR019984">
    <property type="entry name" value="Ribosomal_uS17_bact/chlr"/>
</dbReference>
<dbReference type="InterPro" id="IPR019979">
    <property type="entry name" value="Ribosomal_uS17_CS"/>
</dbReference>
<dbReference type="NCBIfam" id="NF004123">
    <property type="entry name" value="PRK05610.1"/>
    <property type="match status" value="1"/>
</dbReference>
<dbReference type="NCBIfam" id="TIGR03635">
    <property type="entry name" value="uS17_bact"/>
    <property type="match status" value="1"/>
</dbReference>
<dbReference type="PANTHER" id="PTHR10744">
    <property type="entry name" value="40S RIBOSOMAL PROTEIN S11 FAMILY MEMBER"/>
    <property type="match status" value="1"/>
</dbReference>
<dbReference type="PANTHER" id="PTHR10744:SF1">
    <property type="entry name" value="SMALL RIBOSOMAL SUBUNIT PROTEIN US17M"/>
    <property type="match status" value="1"/>
</dbReference>
<dbReference type="Pfam" id="PF00366">
    <property type="entry name" value="Ribosomal_S17"/>
    <property type="match status" value="1"/>
</dbReference>
<dbReference type="PRINTS" id="PR00973">
    <property type="entry name" value="RIBOSOMALS17"/>
</dbReference>
<dbReference type="SUPFAM" id="SSF50249">
    <property type="entry name" value="Nucleic acid-binding proteins"/>
    <property type="match status" value="1"/>
</dbReference>
<dbReference type="PROSITE" id="PS00056">
    <property type="entry name" value="RIBOSOMAL_S17"/>
    <property type="match status" value="1"/>
</dbReference>
<comment type="function">
    <text evidence="1">One of the primary rRNA binding proteins, it binds specifically to the 5'-end of 16S ribosomal RNA.</text>
</comment>
<comment type="subunit">
    <text evidence="1">Part of the 30S ribosomal subunit.</text>
</comment>
<comment type="similarity">
    <text evidence="1">Belongs to the universal ribosomal protein uS17 family.</text>
</comment>
<sequence length="82" mass="9352">MSDKIRTLQGRVTSNKMDKTITVAIERQVKHPIYGKYIKRTTKIHAHDEANQCNEGDVVAIRECRPLSKTKSWTLVEVVSKA</sequence>
<feature type="chain" id="PRO_1000055024" description="Small ribosomal subunit protein uS17">
    <location>
        <begin position="1"/>
        <end position="82"/>
    </location>
</feature>
<accession>Q0I096</accession>
<evidence type="ECO:0000255" key="1">
    <source>
        <dbReference type="HAMAP-Rule" id="MF_01345"/>
    </source>
</evidence>
<evidence type="ECO:0000305" key="2"/>
<gene>
    <name evidence="1" type="primary">rpsQ</name>
    <name type="ordered locus">Shewmr7_0203</name>
</gene>